<feature type="chain" id="PRO_0000058814" description="Serine/threonine-protein phosphatase PP1(4.8)">
    <location>
        <begin position="1"/>
        <end position="346"/>
    </location>
</feature>
<feature type="region of interest" description="Disordered" evidence="2">
    <location>
        <begin position="46"/>
        <end position="65"/>
    </location>
</feature>
<feature type="active site" description="Proton donor" evidence="1">
    <location>
        <position position="163"/>
    </location>
</feature>
<feature type="binding site" evidence="1">
    <location>
        <position position="102"/>
    </location>
    <ligand>
        <name>Mn(2+)</name>
        <dbReference type="ChEBI" id="CHEBI:29035"/>
        <label>1</label>
    </ligand>
</feature>
<feature type="binding site" evidence="1">
    <location>
        <position position="104"/>
    </location>
    <ligand>
        <name>Mn(2+)</name>
        <dbReference type="ChEBI" id="CHEBI:29035"/>
        <label>1</label>
    </ligand>
</feature>
<feature type="binding site" evidence="1">
    <location>
        <position position="130"/>
    </location>
    <ligand>
        <name>Mn(2+)</name>
        <dbReference type="ChEBI" id="CHEBI:29035"/>
        <label>1</label>
    </ligand>
</feature>
<feature type="binding site" evidence="1">
    <location>
        <position position="130"/>
    </location>
    <ligand>
        <name>Mn(2+)</name>
        <dbReference type="ChEBI" id="CHEBI:29035"/>
        <label>2</label>
    </ligand>
</feature>
<feature type="binding site" evidence="1">
    <location>
        <position position="162"/>
    </location>
    <ligand>
        <name>Mn(2+)</name>
        <dbReference type="ChEBI" id="CHEBI:29035"/>
        <label>2</label>
    </ligand>
</feature>
<feature type="binding site" evidence="1">
    <location>
        <position position="211"/>
    </location>
    <ligand>
        <name>Mn(2+)</name>
        <dbReference type="ChEBI" id="CHEBI:29035"/>
        <label>2</label>
    </ligand>
</feature>
<feature type="binding site" evidence="1">
    <location>
        <position position="287"/>
    </location>
    <ligand>
        <name>Mn(2+)</name>
        <dbReference type="ChEBI" id="CHEBI:29035"/>
        <label>2</label>
    </ligand>
</feature>
<reference key="1">
    <citation type="journal article" date="1990" name="Nucleic Acids Res.">
        <title>The Trypanosoma brucei protein phosphatase gene: polycistronic transcription with the RNA polymerase II largest subunit gene.</title>
        <authorList>
            <person name="Evers R."/>
            <person name="Cornelissen A.W.C.A."/>
        </authorList>
    </citation>
    <scope>NUCLEOTIDE SEQUENCE [GENOMIC DNA]</scope>
</reference>
<keyword id="KW-0378">Hydrolase</keyword>
<keyword id="KW-0464">Manganese</keyword>
<keyword id="KW-0479">Metal-binding</keyword>
<keyword id="KW-0904">Protein phosphatase</keyword>
<proteinExistence type="inferred from homology"/>
<dbReference type="EC" id="3.1.3.16"/>
<dbReference type="EMBL" id="X52745">
    <property type="protein sequence ID" value="CAA36959.1"/>
    <property type="molecule type" value="Genomic_DNA"/>
</dbReference>
<dbReference type="SMR" id="P23733"/>
<dbReference type="GO" id="GO:0005737">
    <property type="term" value="C:cytoplasm"/>
    <property type="evidence" value="ECO:0000314"/>
    <property type="project" value="GeneDB"/>
</dbReference>
<dbReference type="GO" id="GO:0005634">
    <property type="term" value="C:nucleus"/>
    <property type="evidence" value="ECO:0000304"/>
    <property type="project" value="GeneDB"/>
</dbReference>
<dbReference type="GO" id="GO:0046872">
    <property type="term" value="F:metal ion binding"/>
    <property type="evidence" value="ECO:0007669"/>
    <property type="project" value="UniProtKB-KW"/>
</dbReference>
<dbReference type="GO" id="GO:0004722">
    <property type="term" value="F:protein serine/threonine phosphatase activity"/>
    <property type="evidence" value="ECO:0007669"/>
    <property type="project" value="UniProtKB-EC"/>
</dbReference>
<dbReference type="CDD" id="cd07414">
    <property type="entry name" value="MPP_PP1_PPKL"/>
    <property type="match status" value="1"/>
</dbReference>
<dbReference type="FunFam" id="3.60.21.10:FF:000047">
    <property type="entry name" value="Serine/threonine-protein phosphatase"/>
    <property type="match status" value="1"/>
</dbReference>
<dbReference type="Gene3D" id="3.60.21.10">
    <property type="match status" value="1"/>
</dbReference>
<dbReference type="InterPro" id="IPR004843">
    <property type="entry name" value="Calcineurin-like_PHP_ApaH"/>
</dbReference>
<dbReference type="InterPro" id="IPR029052">
    <property type="entry name" value="Metallo-depent_PP-like"/>
</dbReference>
<dbReference type="InterPro" id="IPR050341">
    <property type="entry name" value="PP1_catalytic_subunit"/>
</dbReference>
<dbReference type="InterPro" id="IPR006186">
    <property type="entry name" value="Ser/Thr-sp_prot-phosphatase"/>
</dbReference>
<dbReference type="InterPro" id="IPR031675">
    <property type="entry name" value="STPPase_N"/>
</dbReference>
<dbReference type="PANTHER" id="PTHR11668">
    <property type="entry name" value="SERINE/THREONINE PROTEIN PHOSPHATASE"/>
    <property type="match status" value="1"/>
</dbReference>
<dbReference type="PANTHER" id="PTHR11668:SF300">
    <property type="entry name" value="SERINE_THREONINE-PROTEIN PHOSPHATASE"/>
    <property type="match status" value="1"/>
</dbReference>
<dbReference type="Pfam" id="PF00149">
    <property type="entry name" value="Metallophos"/>
    <property type="match status" value="1"/>
</dbReference>
<dbReference type="Pfam" id="PF16891">
    <property type="entry name" value="STPPase_N"/>
    <property type="match status" value="1"/>
</dbReference>
<dbReference type="PRINTS" id="PR00114">
    <property type="entry name" value="STPHPHTASE"/>
</dbReference>
<dbReference type="SMART" id="SM00156">
    <property type="entry name" value="PP2Ac"/>
    <property type="match status" value="1"/>
</dbReference>
<dbReference type="SUPFAM" id="SSF56300">
    <property type="entry name" value="Metallo-dependent phosphatases"/>
    <property type="match status" value="1"/>
</dbReference>
<dbReference type="PROSITE" id="PS00125">
    <property type="entry name" value="SER_THR_PHOSPHATASE"/>
    <property type="match status" value="1"/>
</dbReference>
<organism>
    <name type="scientific">Trypanosoma brucei brucei</name>
    <dbReference type="NCBI Taxonomy" id="5702"/>
    <lineage>
        <taxon>Eukaryota</taxon>
        <taxon>Discoba</taxon>
        <taxon>Euglenozoa</taxon>
        <taxon>Kinetoplastea</taxon>
        <taxon>Metakinetoplastina</taxon>
        <taxon>Trypanosomatida</taxon>
        <taxon>Trypanosomatidae</taxon>
        <taxon>Trypanosoma</taxon>
    </lineage>
</organism>
<name>PP11_TRYBB</name>
<accession>P23733</accession>
<protein>
    <recommendedName>
        <fullName>Serine/threonine-protein phosphatase PP1(4.8)</fullName>
        <ecNumber>3.1.3.16</ecNumber>
    </recommendedName>
</protein>
<sequence>MNCDEIIKKLLLNPVHNTAATRGPAGENCESNQRTYTRISRLAAFQSAQTQESTPKTNGTGRATTEGLTEAEVRWLVMESRALFMSQPMLVEIAAPVRICGDVHGQYTDLLRLFDLGGFPPDANYIFLGDYVDRGDQSLERICLLLAYKLSFPETFFLLRGNHECSSINRIYGFFDECKRRYSVRLWKQFTDTFNCMPVAGLVEGRILCMHGGLSPELTDLDQIRRILRPTDVPDSGLICDLLWSDPSTNMESNWSENDRGVSWTFSESVVKSFNKKFDLDLICRAHQVVDAGYEFFAARQLVTVFSAPNYCDEFDNAGAFMCVDENFMCSFIRIEPTRTLLKYFF</sequence>
<comment type="catalytic activity">
    <reaction>
        <text>O-phospho-L-seryl-[protein] + H2O = L-seryl-[protein] + phosphate</text>
        <dbReference type="Rhea" id="RHEA:20629"/>
        <dbReference type="Rhea" id="RHEA-COMP:9863"/>
        <dbReference type="Rhea" id="RHEA-COMP:11604"/>
        <dbReference type="ChEBI" id="CHEBI:15377"/>
        <dbReference type="ChEBI" id="CHEBI:29999"/>
        <dbReference type="ChEBI" id="CHEBI:43474"/>
        <dbReference type="ChEBI" id="CHEBI:83421"/>
        <dbReference type="EC" id="3.1.3.16"/>
    </reaction>
</comment>
<comment type="catalytic activity">
    <reaction>
        <text>O-phospho-L-threonyl-[protein] + H2O = L-threonyl-[protein] + phosphate</text>
        <dbReference type="Rhea" id="RHEA:47004"/>
        <dbReference type="Rhea" id="RHEA-COMP:11060"/>
        <dbReference type="Rhea" id="RHEA-COMP:11605"/>
        <dbReference type="ChEBI" id="CHEBI:15377"/>
        <dbReference type="ChEBI" id="CHEBI:30013"/>
        <dbReference type="ChEBI" id="CHEBI:43474"/>
        <dbReference type="ChEBI" id="CHEBI:61977"/>
        <dbReference type="EC" id="3.1.3.16"/>
    </reaction>
</comment>
<comment type="cofactor">
    <cofactor evidence="1">
        <name>Mn(2+)</name>
        <dbReference type="ChEBI" id="CHEBI:29035"/>
    </cofactor>
    <text evidence="1">Binds 2 manganese ions per subunit.</text>
</comment>
<comment type="miscellaneous">
    <text>Trypanosoma brucei contains two PP1 genes which are highly similar.</text>
</comment>
<comment type="similarity">
    <text evidence="3">Belongs to the PPP phosphatase family. PP-1 subfamily.</text>
</comment>
<evidence type="ECO:0000250" key="1"/>
<evidence type="ECO:0000256" key="2">
    <source>
        <dbReference type="SAM" id="MobiDB-lite"/>
    </source>
</evidence>
<evidence type="ECO:0000305" key="3"/>